<comment type="subcellular location">
    <subcellularLocation>
        <location evidence="1">Cell membrane</location>
        <topology evidence="1">Single-pass membrane protein</topology>
    </subcellularLocation>
</comment>
<comment type="similarity">
    <text evidence="1">Belongs to the UPF0370 family.</text>
</comment>
<name>YPFN_SALPK</name>
<dbReference type="EMBL" id="FM200053">
    <property type="protein sequence ID" value="CAR58483.1"/>
    <property type="molecule type" value="Genomic_DNA"/>
</dbReference>
<dbReference type="RefSeq" id="WP_000383842.1">
    <property type="nucleotide sequence ID" value="NC_011147.1"/>
</dbReference>
<dbReference type="SMR" id="B5BB21"/>
<dbReference type="KEGG" id="sek:SSPA0360"/>
<dbReference type="HOGENOM" id="CLU_198936_0_0_6"/>
<dbReference type="Proteomes" id="UP000001869">
    <property type="component" value="Chromosome"/>
</dbReference>
<dbReference type="GO" id="GO:0005886">
    <property type="term" value="C:plasma membrane"/>
    <property type="evidence" value="ECO:0007669"/>
    <property type="project" value="UniProtKB-SubCell"/>
</dbReference>
<dbReference type="HAMAP" id="MF_01566">
    <property type="entry name" value="UPF0370"/>
    <property type="match status" value="1"/>
</dbReference>
<dbReference type="InterPro" id="IPR020910">
    <property type="entry name" value="UPF0370"/>
</dbReference>
<dbReference type="NCBIfam" id="NF010185">
    <property type="entry name" value="PRK13664.1"/>
    <property type="match status" value="1"/>
</dbReference>
<dbReference type="Pfam" id="PF13980">
    <property type="entry name" value="UPF0370"/>
    <property type="match status" value="1"/>
</dbReference>
<proteinExistence type="inferred from homology"/>
<sequence>MDWLAKYWWILVLVFLVGVLLNVIKDLKRIDHKKFLANKPELPPHRDFNDKWDDEEDWPKKDQPKK</sequence>
<reference key="1">
    <citation type="journal article" date="2009" name="BMC Genomics">
        <title>Pseudogene accumulation in the evolutionary histories of Salmonella enterica serovars Paratyphi A and Typhi.</title>
        <authorList>
            <person name="Holt K.E."/>
            <person name="Thomson N.R."/>
            <person name="Wain J."/>
            <person name="Langridge G.C."/>
            <person name="Hasan R."/>
            <person name="Bhutta Z.A."/>
            <person name="Quail M.A."/>
            <person name="Norbertczak H."/>
            <person name="Walker D."/>
            <person name="Simmonds M."/>
            <person name="White B."/>
            <person name="Bason N."/>
            <person name="Mungall K."/>
            <person name="Dougan G."/>
            <person name="Parkhill J."/>
        </authorList>
    </citation>
    <scope>NUCLEOTIDE SEQUENCE [LARGE SCALE GENOMIC DNA]</scope>
    <source>
        <strain>AKU_12601</strain>
    </source>
</reference>
<keyword id="KW-1003">Cell membrane</keyword>
<keyword id="KW-0472">Membrane</keyword>
<keyword id="KW-0812">Transmembrane</keyword>
<keyword id="KW-1133">Transmembrane helix</keyword>
<accession>B5BB21</accession>
<protein>
    <recommendedName>
        <fullName evidence="1">UPF0370 protein YpfN</fullName>
    </recommendedName>
</protein>
<feature type="chain" id="PRO_1000199733" description="UPF0370 protein YpfN">
    <location>
        <begin position="1"/>
        <end position="66"/>
    </location>
</feature>
<feature type="transmembrane region" description="Helical" evidence="1">
    <location>
        <begin position="4"/>
        <end position="24"/>
    </location>
</feature>
<feature type="region of interest" description="Disordered" evidence="2">
    <location>
        <begin position="39"/>
        <end position="66"/>
    </location>
</feature>
<feature type="compositionally biased region" description="Basic and acidic residues" evidence="2">
    <location>
        <begin position="42"/>
        <end position="51"/>
    </location>
</feature>
<organism>
    <name type="scientific">Salmonella paratyphi A (strain AKU_12601)</name>
    <dbReference type="NCBI Taxonomy" id="554290"/>
    <lineage>
        <taxon>Bacteria</taxon>
        <taxon>Pseudomonadati</taxon>
        <taxon>Pseudomonadota</taxon>
        <taxon>Gammaproteobacteria</taxon>
        <taxon>Enterobacterales</taxon>
        <taxon>Enterobacteriaceae</taxon>
        <taxon>Salmonella</taxon>
    </lineage>
</organism>
<gene>
    <name evidence="1" type="primary">ypfN</name>
    <name type="ordered locus">SSPA0360</name>
</gene>
<evidence type="ECO:0000255" key="1">
    <source>
        <dbReference type="HAMAP-Rule" id="MF_01566"/>
    </source>
</evidence>
<evidence type="ECO:0000256" key="2">
    <source>
        <dbReference type="SAM" id="MobiDB-lite"/>
    </source>
</evidence>